<sequence>MTKKIIFTGGGTAGHVTLNLILIPKFIKDGWEVHYIGDDKGIEHQEIKKSGLDVTFHAIATGKLRRYFSWQNLLDIFKVGFGVMQSLFIIARLRPKALFSKGGFVSVPPVIAARLLGVPAFIHESDLSMGLANRIAYRFATTMYTTFEQEQTLAKLKHVGAVTKVTGPGSRSVTSKQLEAVLEYFDPNLKTLLFIGGSAGARVFNRFITDHPELKEDFNIINISGDPSLNELSWHLYRVDYVTDLYQPLMEMADLVVTRGGSNTLFELLAMRKLQLIIPLGKEASRGDQLENAHYFTTRGYAEQLLEQELTLPHFQEKVREVFAKQSDYLSAMKSSSELQSPESFYQLLSADISSATKEN</sequence>
<name>MURG_STRE4</name>
<reference key="1">
    <citation type="journal article" date="2009" name="PLoS Pathog.">
        <title>Genomic evidence for the evolution of Streptococcus equi: host restriction, increased virulence, and genetic exchange with human pathogens.</title>
        <authorList>
            <person name="Holden M.T.G."/>
            <person name="Heather Z."/>
            <person name="Paillot R."/>
            <person name="Steward K.F."/>
            <person name="Webb K."/>
            <person name="Ainslie F."/>
            <person name="Jourdan T."/>
            <person name="Bason N.C."/>
            <person name="Holroyd N.E."/>
            <person name="Mungall K."/>
            <person name="Quail M.A."/>
            <person name="Sanders M."/>
            <person name="Simmonds M."/>
            <person name="Willey D."/>
            <person name="Brooks K."/>
            <person name="Aanensen D.M."/>
            <person name="Spratt B.G."/>
            <person name="Jolley K.A."/>
            <person name="Maiden M.C.J."/>
            <person name="Kehoe M."/>
            <person name="Chanter N."/>
            <person name="Bentley S.D."/>
            <person name="Robinson C."/>
            <person name="Maskell D.J."/>
            <person name="Parkhill J."/>
            <person name="Waller A.S."/>
        </authorList>
    </citation>
    <scope>NUCLEOTIDE SEQUENCE [LARGE SCALE GENOMIC DNA]</scope>
    <source>
        <strain>4047</strain>
    </source>
</reference>
<organism>
    <name type="scientific">Streptococcus equi subsp. equi (strain 4047)</name>
    <dbReference type="NCBI Taxonomy" id="553482"/>
    <lineage>
        <taxon>Bacteria</taxon>
        <taxon>Bacillati</taxon>
        <taxon>Bacillota</taxon>
        <taxon>Bacilli</taxon>
        <taxon>Lactobacillales</taxon>
        <taxon>Streptococcaceae</taxon>
        <taxon>Streptococcus</taxon>
    </lineage>
</organism>
<keyword id="KW-0131">Cell cycle</keyword>
<keyword id="KW-0132">Cell division</keyword>
<keyword id="KW-1003">Cell membrane</keyword>
<keyword id="KW-0133">Cell shape</keyword>
<keyword id="KW-0961">Cell wall biogenesis/degradation</keyword>
<keyword id="KW-0328">Glycosyltransferase</keyword>
<keyword id="KW-0472">Membrane</keyword>
<keyword id="KW-0573">Peptidoglycan synthesis</keyword>
<keyword id="KW-0808">Transferase</keyword>
<comment type="function">
    <text evidence="1">Cell wall formation. Catalyzes the transfer of a GlcNAc subunit on undecaprenyl-pyrophosphoryl-MurNAc-pentapeptide (lipid intermediate I) to form undecaprenyl-pyrophosphoryl-MurNAc-(pentapeptide)GlcNAc (lipid intermediate II).</text>
</comment>
<comment type="catalytic activity">
    <reaction evidence="1">
        <text>Mur2Ac(oyl-L-Ala-gamma-D-Glu-L-Lys-D-Ala-D-Ala)-di-trans,octa-cis-undecaprenyl diphosphate + UDP-N-acetyl-alpha-D-glucosamine = beta-D-GlcNAc-(1-&gt;4)-Mur2Ac(oyl-L-Ala-gamma-D-Glu-L-Lys-D-Ala-D-Ala)-di-trans,octa-cis-undecaprenyl diphosphate + UDP + H(+)</text>
        <dbReference type="Rhea" id="RHEA:23192"/>
        <dbReference type="ChEBI" id="CHEBI:15378"/>
        <dbReference type="ChEBI" id="CHEBI:57705"/>
        <dbReference type="ChEBI" id="CHEBI:58223"/>
        <dbReference type="ChEBI" id="CHEBI:60032"/>
        <dbReference type="ChEBI" id="CHEBI:60033"/>
        <dbReference type="EC" id="2.4.1.227"/>
    </reaction>
</comment>
<comment type="pathway">
    <text evidence="1">Cell wall biogenesis; peptidoglycan biosynthesis.</text>
</comment>
<comment type="subcellular location">
    <subcellularLocation>
        <location evidence="1">Cell membrane</location>
        <topology evidence="1">Peripheral membrane protein</topology>
        <orientation evidence="1">Cytoplasmic side</orientation>
    </subcellularLocation>
</comment>
<comment type="similarity">
    <text evidence="1">Belongs to the glycosyltransferase 28 family. MurG subfamily.</text>
</comment>
<gene>
    <name evidence="1" type="primary">murG</name>
    <name type="ordered locus">SEQ_0618</name>
</gene>
<evidence type="ECO:0000255" key="1">
    <source>
        <dbReference type="HAMAP-Rule" id="MF_00033"/>
    </source>
</evidence>
<protein>
    <recommendedName>
        <fullName evidence="1">UDP-N-acetylglucosamine--N-acetylmuramyl-(pentapeptide) pyrophosphoryl-undecaprenol N-acetylglucosamine transferase</fullName>
        <ecNumber evidence="1">2.4.1.227</ecNumber>
    </recommendedName>
    <alternativeName>
        <fullName evidence="1">Undecaprenyl-PP-MurNAc-pentapeptide-UDPGlcNAc GlcNAc transferase</fullName>
    </alternativeName>
</protein>
<dbReference type="EC" id="2.4.1.227" evidence="1"/>
<dbReference type="EMBL" id="FM204883">
    <property type="protein sequence ID" value="CAW92919.1"/>
    <property type="molecule type" value="Genomic_DNA"/>
</dbReference>
<dbReference type="RefSeq" id="WP_012679169.1">
    <property type="nucleotide sequence ID" value="NC_012471.1"/>
</dbReference>
<dbReference type="SMR" id="C0M6J2"/>
<dbReference type="CAZy" id="GT28">
    <property type="family name" value="Glycosyltransferase Family 28"/>
</dbReference>
<dbReference type="KEGG" id="seu:SEQ_0618"/>
<dbReference type="HOGENOM" id="CLU_037404_0_0_9"/>
<dbReference type="OrthoDB" id="9808936at2"/>
<dbReference type="UniPathway" id="UPA00219"/>
<dbReference type="Proteomes" id="UP000001365">
    <property type="component" value="Chromosome"/>
</dbReference>
<dbReference type="GO" id="GO:0005886">
    <property type="term" value="C:plasma membrane"/>
    <property type="evidence" value="ECO:0007669"/>
    <property type="project" value="UniProtKB-SubCell"/>
</dbReference>
<dbReference type="GO" id="GO:0050511">
    <property type="term" value="F:undecaprenyldiphospho-muramoylpentapeptide beta-N-acetylglucosaminyltransferase activity"/>
    <property type="evidence" value="ECO:0007669"/>
    <property type="project" value="UniProtKB-UniRule"/>
</dbReference>
<dbReference type="GO" id="GO:0005975">
    <property type="term" value="P:carbohydrate metabolic process"/>
    <property type="evidence" value="ECO:0007669"/>
    <property type="project" value="InterPro"/>
</dbReference>
<dbReference type="GO" id="GO:0051301">
    <property type="term" value="P:cell division"/>
    <property type="evidence" value="ECO:0007669"/>
    <property type="project" value="UniProtKB-KW"/>
</dbReference>
<dbReference type="GO" id="GO:0071555">
    <property type="term" value="P:cell wall organization"/>
    <property type="evidence" value="ECO:0007669"/>
    <property type="project" value="UniProtKB-KW"/>
</dbReference>
<dbReference type="GO" id="GO:0030259">
    <property type="term" value="P:lipid glycosylation"/>
    <property type="evidence" value="ECO:0007669"/>
    <property type="project" value="UniProtKB-UniRule"/>
</dbReference>
<dbReference type="GO" id="GO:0009252">
    <property type="term" value="P:peptidoglycan biosynthetic process"/>
    <property type="evidence" value="ECO:0007669"/>
    <property type="project" value="UniProtKB-UniRule"/>
</dbReference>
<dbReference type="GO" id="GO:0008360">
    <property type="term" value="P:regulation of cell shape"/>
    <property type="evidence" value="ECO:0007669"/>
    <property type="project" value="UniProtKB-KW"/>
</dbReference>
<dbReference type="CDD" id="cd03785">
    <property type="entry name" value="GT28_MurG"/>
    <property type="match status" value="1"/>
</dbReference>
<dbReference type="Gene3D" id="3.40.50.2000">
    <property type="entry name" value="Glycogen Phosphorylase B"/>
    <property type="match status" value="2"/>
</dbReference>
<dbReference type="HAMAP" id="MF_00033">
    <property type="entry name" value="MurG"/>
    <property type="match status" value="1"/>
</dbReference>
<dbReference type="InterPro" id="IPR006009">
    <property type="entry name" value="GlcNAc_MurG"/>
</dbReference>
<dbReference type="InterPro" id="IPR007235">
    <property type="entry name" value="Glyco_trans_28_C"/>
</dbReference>
<dbReference type="InterPro" id="IPR004276">
    <property type="entry name" value="GlycoTrans_28_N"/>
</dbReference>
<dbReference type="PANTHER" id="PTHR21015:SF27">
    <property type="entry name" value="UDP-N-ACETYLGLUCOSAMINE--N-ACETYLMURAMYL-(PENTAPEPTIDE) PYROPHOSPHORYL-UNDECAPRENOL N-ACETYLGLUCOSAMINE TRANSFERASE"/>
    <property type="match status" value="1"/>
</dbReference>
<dbReference type="PANTHER" id="PTHR21015">
    <property type="entry name" value="UDP-N-ACETYLGLUCOSAMINE--N-ACETYLMURAMYL-(PENTAPEPTIDE) PYROPHOSPHORYL-UNDECAPRENOL N-ACETYLGLUCOSAMINE TRANSFERASE 1"/>
    <property type="match status" value="1"/>
</dbReference>
<dbReference type="Pfam" id="PF04101">
    <property type="entry name" value="Glyco_tran_28_C"/>
    <property type="match status" value="1"/>
</dbReference>
<dbReference type="Pfam" id="PF03033">
    <property type="entry name" value="Glyco_transf_28"/>
    <property type="match status" value="1"/>
</dbReference>
<dbReference type="SUPFAM" id="SSF53756">
    <property type="entry name" value="UDP-Glycosyltransferase/glycogen phosphorylase"/>
    <property type="match status" value="1"/>
</dbReference>
<feature type="chain" id="PRO_1000192144" description="UDP-N-acetylglucosamine--N-acetylmuramyl-(pentapeptide) pyrophosphoryl-undecaprenol N-acetylglucosamine transferase">
    <location>
        <begin position="1"/>
        <end position="360"/>
    </location>
</feature>
<feature type="binding site" evidence="1">
    <location>
        <begin position="12"/>
        <end position="14"/>
    </location>
    <ligand>
        <name>UDP-N-acetyl-alpha-D-glucosamine</name>
        <dbReference type="ChEBI" id="CHEBI:57705"/>
    </ligand>
</feature>
<feature type="binding site" evidence="1">
    <location>
        <position position="198"/>
    </location>
    <ligand>
        <name>UDP-N-acetyl-alpha-D-glucosamine</name>
        <dbReference type="ChEBI" id="CHEBI:57705"/>
    </ligand>
</feature>
<feature type="binding site" evidence="1">
    <location>
        <position position="289"/>
    </location>
    <ligand>
        <name>UDP-N-acetyl-alpha-D-glucosamine</name>
        <dbReference type="ChEBI" id="CHEBI:57705"/>
    </ligand>
</feature>
<proteinExistence type="inferred from homology"/>
<accession>C0M6J2</accession>